<name>MAZE_STAAR</name>
<accession>Q6GF04</accession>
<sequence>MLSFSQNRSHSLEQSLKEGYSQMADLNLSLANEAFPIECEACDCNETYLSSNSTNE</sequence>
<proteinExistence type="inferred from homology"/>
<protein>
    <recommendedName>
        <fullName>Antitoxin MazE</fullName>
    </recommendedName>
</protein>
<reference key="1">
    <citation type="journal article" date="2004" name="Proc. Natl. Acad. Sci. U.S.A.">
        <title>Complete genomes of two clinical Staphylococcus aureus strains: evidence for the rapid evolution of virulence and drug resistance.</title>
        <authorList>
            <person name="Holden M.T.G."/>
            <person name="Feil E.J."/>
            <person name="Lindsay J.A."/>
            <person name="Peacock S.J."/>
            <person name="Day N.P.J."/>
            <person name="Enright M.C."/>
            <person name="Foster T.J."/>
            <person name="Moore C.E."/>
            <person name="Hurst L."/>
            <person name="Atkin R."/>
            <person name="Barron A."/>
            <person name="Bason N."/>
            <person name="Bentley S.D."/>
            <person name="Chillingworth C."/>
            <person name="Chillingworth T."/>
            <person name="Churcher C."/>
            <person name="Clark L."/>
            <person name="Corton C."/>
            <person name="Cronin A."/>
            <person name="Doggett J."/>
            <person name="Dowd L."/>
            <person name="Feltwell T."/>
            <person name="Hance Z."/>
            <person name="Harris B."/>
            <person name="Hauser H."/>
            <person name="Holroyd S."/>
            <person name="Jagels K."/>
            <person name="James K.D."/>
            <person name="Lennard N."/>
            <person name="Line A."/>
            <person name="Mayes R."/>
            <person name="Moule S."/>
            <person name="Mungall K."/>
            <person name="Ormond D."/>
            <person name="Quail M.A."/>
            <person name="Rabbinowitsch E."/>
            <person name="Rutherford K.M."/>
            <person name="Sanders M."/>
            <person name="Sharp S."/>
            <person name="Simmonds M."/>
            <person name="Stevens K."/>
            <person name="Whitehead S."/>
            <person name="Barrell B.G."/>
            <person name="Spratt B.G."/>
            <person name="Parkhill J."/>
        </authorList>
    </citation>
    <scope>NUCLEOTIDE SEQUENCE [LARGE SCALE GENOMIC DNA]</scope>
    <source>
        <strain>MRSA252</strain>
    </source>
</reference>
<dbReference type="EMBL" id="BX571856">
    <property type="protein sequence ID" value="CAG41138.1"/>
    <property type="molecule type" value="Genomic_DNA"/>
</dbReference>
<dbReference type="RefSeq" id="WP_000948331.1">
    <property type="nucleotide sequence ID" value="NC_002952.2"/>
</dbReference>
<dbReference type="SMR" id="Q6GF04"/>
<dbReference type="GeneID" id="98346377"/>
<dbReference type="KEGG" id="sar:SAR2157"/>
<dbReference type="HOGENOM" id="CLU_3012108_0_0_9"/>
<dbReference type="Proteomes" id="UP000000596">
    <property type="component" value="Chromosome"/>
</dbReference>
<dbReference type="GO" id="GO:0006355">
    <property type="term" value="P:regulation of DNA-templated transcription"/>
    <property type="evidence" value="ECO:0007669"/>
    <property type="project" value="InterPro"/>
</dbReference>
<dbReference type="Gene3D" id="1.10.1220.10">
    <property type="entry name" value="Met repressor-like"/>
    <property type="match status" value="1"/>
</dbReference>
<dbReference type="InterPro" id="IPR013321">
    <property type="entry name" value="Arc_rbn_hlx_hlx"/>
</dbReference>
<dbReference type="InterPro" id="IPR048242">
    <property type="entry name" value="MazE"/>
</dbReference>
<dbReference type="NCBIfam" id="NF041459">
    <property type="entry name" value="antitoxMazE_Staph"/>
    <property type="match status" value="1"/>
</dbReference>
<gene>
    <name type="primary">mazE</name>
    <name type="ordered locus">SAR2157</name>
</gene>
<organism>
    <name type="scientific">Staphylococcus aureus (strain MRSA252)</name>
    <dbReference type="NCBI Taxonomy" id="282458"/>
    <lineage>
        <taxon>Bacteria</taxon>
        <taxon>Bacillati</taxon>
        <taxon>Bacillota</taxon>
        <taxon>Bacilli</taxon>
        <taxon>Bacillales</taxon>
        <taxon>Staphylococcaceae</taxon>
        <taxon>Staphylococcus</taxon>
    </lineage>
</organism>
<feature type="chain" id="PRO_0000330712" description="Antitoxin MazE">
    <location>
        <begin position="1"/>
        <end position="56"/>
    </location>
</feature>
<evidence type="ECO:0000250" key="1">
    <source>
        <dbReference type="UniProtKB" id="P0C7B4"/>
    </source>
</evidence>
<evidence type="ECO:0000305" key="2"/>
<keyword id="KW-1277">Toxin-antitoxin system</keyword>
<comment type="function">
    <text evidence="1">Antitoxin component of a type II toxin-antitoxin (TA) system. Labile antitoxin that binds to cognate MazF toxin and counteracts its endoribonuclease activity.</text>
</comment>
<comment type="subunit">
    <text evidence="1">Forms a complex with cognate toxin MazF which inhibits the endoribonuclease activity of MazF.</text>
</comment>
<comment type="similarity">
    <text evidence="2">Belongs to the MazE/EndoAI family.</text>
</comment>